<name>GLSA1_ECOLI</name>
<comment type="catalytic activity">
    <reaction evidence="1 2">
        <text>L-glutamine + H2O = L-glutamate + NH4(+)</text>
        <dbReference type="Rhea" id="RHEA:15889"/>
        <dbReference type="ChEBI" id="CHEBI:15377"/>
        <dbReference type="ChEBI" id="CHEBI:28938"/>
        <dbReference type="ChEBI" id="CHEBI:29985"/>
        <dbReference type="ChEBI" id="CHEBI:58359"/>
        <dbReference type="EC" id="3.5.1.2"/>
    </reaction>
</comment>
<comment type="biophysicochemical properties">
    <kinetics>
        <KM evidence="2">7.3 mM for glutamine</KM>
    </kinetics>
</comment>
<comment type="subunit">
    <text evidence="1 2">Homotetramer.</text>
</comment>
<comment type="similarity">
    <text evidence="1">Belongs to the glutaminase family.</text>
</comment>
<sequence>MLDANKLQQAVDQAYTQFHSLNGGQNADYIPFLANVPGQLAAVAIVTCDGNVYSAGDSDYRFALESISKVCTLALALEDVGPQAVQDKIGADPTGLPFNSVIALELHGGKPLSPLVNAGAIATTSLINAENVEQRWQRILHIQQQLAGEQVALSDEVNQSEQTTNFHNRAIAWLLYSAGYLYCDAMEACDVYTRQCSTLLNTIELATLGATLAAGGVNPLTHKRVLQADNVPYILAEMMMEGLYGRSGDWAYRVGLPGKSGVGGGILAVVPGVMGIAAFSPPLDEDGNSVRGQKMVASVAKQLGYNVFKG</sequence>
<proteinExistence type="evidence at protein level"/>
<organism>
    <name type="scientific">Escherichia coli (strain K12)</name>
    <dbReference type="NCBI Taxonomy" id="83333"/>
    <lineage>
        <taxon>Bacteria</taxon>
        <taxon>Pseudomonadati</taxon>
        <taxon>Pseudomonadota</taxon>
        <taxon>Gammaproteobacteria</taxon>
        <taxon>Enterobacterales</taxon>
        <taxon>Enterobacteriaceae</taxon>
        <taxon>Escherichia</taxon>
    </lineage>
</organism>
<protein>
    <recommendedName>
        <fullName evidence="1">Glutaminase 1</fullName>
        <ecNumber evidence="1">3.5.1.2</ecNumber>
    </recommendedName>
</protein>
<gene>
    <name evidence="1" type="primary">glsA1</name>
    <name type="synonym">ybaS</name>
    <name type="ordered locus">b0485</name>
    <name type="ordered locus">JW0474</name>
</gene>
<evidence type="ECO:0000255" key="1">
    <source>
        <dbReference type="HAMAP-Rule" id="MF_00313"/>
    </source>
</evidence>
<evidence type="ECO:0000269" key="2">
    <source>
    </source>
</evidence>
<evidence type="ECO:0000269" key="3">
    <source>
    </source>
</evidence>
<evidence type="ECO:0007829" key="4">
    <source>
        <dbReference type="PDB" id="1U60"/>
    </source>
</evidence>
<keyword id="KW-0002">3D-structure</keyword>
<keyword id="KW-0007">Acetylation</keyword>
<keyword id="KW-0378">Hydrolase</keyword>
<keyword id="KW-1185">Reference proteome</keyword>
<reference key="1">
    <citation type="submission" date="1997-01" db="EMBL/GenBank/DDBJ databases">
        <title>Sequence of minutes 4-25 of Escherichia coli.</title>
        <authorList>
            <person name="Chung E."/>
            <person name="Allen E."/>
            <person name="Araujo R."/>
            <person name="Aparicio A.M."/>
            <person name="Davis K."/>
            <person name="Duncan M."/>
            <person name="Federspiel N."/>
            <person name="Hyman R."/>
            <person name="Kalman S."/>
            <person name="Komp C."/>
            <person name="Kurdi O."/>
            <person name="Lew H."/>
            <person name="Lin D."/>
            <person name="Namath A."/>
            <person name="Oefner P."/>
            <person name="Roberts D."/>
            <person name="Schramm S."/>
            <person name="Davis R.W."/>
        </authorList>
    </citation>
    <scope>NUCLEOTIDE SEQUENCE [LARGE SCALE GENOMIC DNA]</scope>
    <source>
        <strain>K12 / MG1655 / ATCC 47076</strain>
    </source>
</reference>
<reference key="2">
    <citation type="journal article" date="1997" name="Science">
        <title>The complete genome sequence of Escherichia coli K-12.</title>
        <authorList>
            <person name="Blattner F.R."/>
            <person name="Plunkett G. III"/>
            <person name="Bloch C.A."/>
            <person name="Perna N.T."/>
            <person name="Burland V."/>
            <person name="Riley M."/>
            <person name="Collado-Vides J."/>
            <person name="Glasner J.D."/>
            <person name="Rode C.K."/>
            <person name="Mayhew G.F."/>
            <person name="Gregor J."/>
            <person name="Davis N.W."/>
            <person name="Kirkpatrick H.A."/>
            <person name="Goeden M.A."/>
            <person name="Rose D.J."/>
            <person name="Mau B."/>
            <person name="Shao Y."/>
        </authorList>
    </citation>
    <scope>NUCLEOTIDE SEQUENCE [LARGE SCALE GENOMIC DNA]</scope>
    <source>
        <strain>K12 / MG1655 / ATCC 47076</strain>
    </source>
</reference>
<reference key="3">
    <citation type="journal article" date="2006" name="Mol. Syst. Biol.">
        <title>Highly accurate genome sequences of Escherichia coli K-12 strains MG1655 and W3110.</title>
        <authorList>
            <person name="Hayashi K."/>
            <person name="Morooka N."/>
            <person name="Yamamoto Y."/>
            <person name="Fujita K."/>
            <person name="Isono K."/>
            <person name="Choi S."/>
            <person name="Ohtsubo E."/>
            <person name="Baba T."/>
            <person name="Wanner B.L."/>
            <person name="Mori H."/>
            <person name="Horiuchi T."/>
        </authorList>
    </citation>
    <scope>NUCLEOTIDE SEQUENCE [LARGE SCALE GENOMIC DNA]</scope>
    <source>
        <strain>K12 / W3110 / ATCC 27325 / DSM 5911</strain>
    </source>
</reference>
<reference key="4">
    <citation type="journal article" date="2009" name="Mol. Cell. Proteomics">
        <title>Lysine acetylation is a highly abundant and evolutionarily conserved modification in Escherichia coli.</title>
        <authorList>
            <person name="Zhang J."/>
            <person name="Sprung R."/>
            <person name="Pei J."/>
            <person name="Tan X."/>
            <person name="Kim S."/>
            <person name="Zhu H."/>
            <person name="Liu C.F."/>
            <person name="Grishin N.V."/>
            <person name="Zhao Y."/>
        </authorList>
    </citation>
    <scope>ACETYLATION [LARGE SCALE ANALYSIS] AT LYS-294</scope>
    <scope>IDENTIFICATION BY MASS SPECTROMETRY</scope>
    <source>
        <strain>K12 / JW1106</strain>
        <strain>K12 / MG1655 / ATCC 47076</strain>
    </source>
</reference>
<reference key="5">
    <citation type="journal article" date="2008" name="Biochemistry">
        <title>Functional and structural characterization of four glutaminases from Escherichia coli and Bacillus subtilis.</title>
        <authorList>
            <person name="Brown G."/>
            <person name="Singer A."/>
            <person name="Proudfoot M."/>
            <person name="Skarina T."/>
            <person name="Kim Y."/>
            <person name="Chang C."/>
            <person name="Dementieva I."/>
            <person name="Kuznetsova E."/>
            <person name="Gonzalez C.F."/>
            <person name="Joachimiak A."/>
            <person name="Savchenko A."/>
            <person name="Yakunin A.F."/>
        </authorList>
    </citation>
    <scope>X-RAY CRYSTALLOGRAPHY (1.61 ANGSTROMS)</scope>
    <scope>CATALYTIC ACTIVITY</scope>
    <scope>MUTAGENESIS OF LYS-69; ASN-117; SER-160; GLU-161; GLN-162; ASN-168; TYR-192; TYR-244 AND SER-260</scope>
    <scope>BIOPHYSICOCHEMICAL PROPERTIES</scope>
    <scope>SUBUNIT</scope>
</reference>
<feature type="chain" id="PRO_0000110607" description="Glutaminase 1">
    <location>
        <begin position="1"/>
        <end position="310"/>
    </location>
</feature>
<feature type="binding site" evidence="1">
    <location>
        <position position="66"/>
    </location>
    <ligand>
        <name>substrate</name>
    </ligand>
</feature>
<feature type="binding site" evidence="1">
    <location>
        <position position="117"/>
    </location>
    <ligand>
        <name>substrate</name>
    </ligand>
</feature>
<feature type="binding site" evidence="1">
    <location>
        <position position="161"/>
    </location>
    <ligand>
        <name>substrate</name>
    </ligand>
</feature>
<feature type="binding site" evidence="1">
    <location>
        <position position="168"/>
    </location>
    <ligand>
        <name>substrate</name>
    </ligand>
</feature>
<feature type="binding site" evidence="1">
    <location>
        <position position="192"/>
    </location>
    <ligand>
        <name>substrate</name>
    </ligand>
</feature>
<feature type="binding site" evidence="1">
    <location>
        <position position="244"/>
    </location>
    <ligand>
        <name>substrate</name>
    </ligand>
</feature>
<feature type="binding site" evidence="1">
    <location>
        <position position="262"/>
    </location>
    <ligand>
        <name>substrate</name>
    </ligand>
</feature>
<feature type="modified residue" description="N6-acetyllysine" evidence="1 3">
    <location>
        <position position="294"/>
    </location>
</feature>
<feature type="mutagenesis site" description="Loss of activity." evidence="2">
    <original>K</original>
    <variation>A</variation>
    <location>
        <position position="69"/>
    </location>
</feature>
<feature type="mutagenesis site" description="Loss of activity." evidence="2">
    <original>N</original>
    <variation>A</variation>
    <location>
        <position position="117"/>
    </location>
</feature>
<feature type="mutagenesis site" description="Loss of activity." evidence="2">
    <original>S</original>
    <variation>A</variation>
    <location>
        <position position="160"/>
    </location>
</feature>
<feature type="mutagenesis site" description="Strongly reduced activity." evidence="2">
    <original>E</original>
    <variation>A</variation>
    <location>
        <position position="161"/>
    </location>
</feature>
<feature type="mutagenesis site" description="No effect." evidence="2">
    <original>Q</original>
    <variation>A</variation>
    <location>
        <position position="162"/>
    </location>
</feature>
<feature type="mutagenesis site" description="Loss of activity." evidence="2">
    <original>N</original>
    <variation>A</variation>
    <location>
        <position position="168"/>
    </location>
</feature>
<feature type="mutagenesis site" description="Loss of activity." evidence="2">
    <original>Y</original>
    <variation>A</variation>
    <location>
        <position position="192"/>
    </location>
</feature>
<feature type="mutagenesis site" description="Loss of activity." evidence="2">
    <original>Y</original>
    <variation>A</variation>
    <location>
        <position position="244"/>
    </location>
</feature>
<feature type="mutagenesis site" description="Reduced activity." evidence="2">
    <original>S</original>
    <variation>A</variation>
    <location>
        <position position="260"/>
    </location>
</feature>
<feature type="helix" evidence="4">
    <location>
        <begin position="4"/>
        <end position="18"/>
    </location>
</feature>
<feature type="helix" evidence="4">
    <location>
        <begin position="31"/>
        <end position="34"/>
    </location>
</feature>
<feature type="strand" evidence="4">
    <location>
        <begin position="42"/>
        <end position="47"/>
    </location>
</feature>
<feature type="strand" evidence="4">
    <location>
        <begin position="52"/>
        <end position="57"/>
    </location>
</feature>
<feature type="helix" evidence="4">
    <location>
        <begin position="65"/>
        <end position="67"/>
    </location>
</feature>
<feature type="helix" evidence="4">
    <location>
        <begin position="68"/>
        <end position="80"/>
    </location>
</feature>
<feature type="helix" evidence="4">
    <location>
        <begin position="82"/>
        <end position="88"/>
    </location>
</feature>
<feature type="helix" evidence="4">
    <location>
        <begin position="101"/>
        <end position="106"/>
    </location>
</feature>
<feature type="turn" evidence="4">
    <location>
        <begin position="107"/>
        <end position="109"/>
    </location>
</feature>
<feature type="helix" evidence="4">
    <location>
        <begin position="117"/>
        <end position="126"/>
    </location>
</feature>
<feature type="helix" evidence="4">
    <location>
        <begin position="132"/>
        <end position="147"/>
    </location>
</feature>
<feature type="helix" evidence="4">
    <location>
        <begin position="155"/>
        <end position="162"/>
    </location>
</feature>
<feature type="helix" evidence="4">
    <location>
        <begin position="166"/>
        <end position="178"/>
    </location>
</feature>
<feature type="helix" evidence="4">
    <location>
        <begin position="185"/>
        <end position="195"/>
    </location>
</feature>
<feature type="strand" evidence="4">
    <location>
        <begin position="198"/>
        <end position="200"/>
    </location>
</feature>
<feature type="helix" evidence="4">
    <location>
        <begin position="202"/>
        <end position="213"/>
    </location>
</feature>
<feature type="strand" evidence="4">
    <location>
        <begin position="216"/>
        <end position="218"/>
    </location>
</feature>
<feature type="turn" evidence="4">
    <location>
        <begin position="219"/>
        <end position="222"/>
    </location>
</feature>
<feature type="helix" evidence="4">
    <location>
        <begin position="228"/>
        <end position="230"/>
    </location>
</feature>
<feature type="helix" evidence="4">
    <location>
        <begin position="231"/>
        <end position="241"/>
    </location>
</feature>
<feature type="helix" evidence="4">
    <location>
        <begin position="244"/>
        <end position="246"/>
    </location>
</feature>
<feature type="helix" evidence="4">
    <location>
        <begin position="247"/>
        <end position="253"/>
    </location>
</feature>
<feature type="strand" evidence="4">
    <location>
        <begin position="258"/>
        <end position="260"/>
    </location>
</feature>
<feature type="strand" evidence="4">
    <location>
        <begin position="264"/>
        <end position="270"/>
    </location>
</feature>
<feature type="turn" evidence="4">
    <location>
        <begin position="271"/>
        <end position="273"/>
    </location>
</feature>
<feature type="strand" evidence="4">
    <location>
        <begin position="274"/>
        <end position="279"/>
    </location>
</feature>
<feature type="helix" evidence="4">
    <location>
        <begin position="290"/>
        <end position="303"/>
    </location>
</feature>
<accession>P77454</accession>
<accession>Q2MBU2</accession>
<dbReference type="EC" id="3.5.1.2" evidence="1"/>
<dbReference type="EMBL" id="U82664">
    <property type="protein sequence ID" value="AAB40239.1"/>
    <property type="molecule type" value="Genomic_DNA"/>
</dbReference>
<dbReference type="EMBL" id="U00096">
    <property type="protein sequence ID" value="AAC73587.1"/>
    <property type="molecule type" value="Genomic_DNA"/>
</dbReference>
<dbReference type="EMBL" id="AP009048">
    <property type="protein sequence ID" value="BAE76264.1"/>
    <property type="molecule type" value="Genomic_DNA"/>
</dbReference>
<dbReference type="PIR" id="D64779">
    <property type="entry name" value="D64779"/>
</dbReference>
<dbReference type="RefSeq" id="NP_415018.1">
    <property type="nucleotide sequence ID" value="NC_000913.3"/>
</dbReference>
<dbReference type="PDB" id="1U60">
    <property type="method" value="X-ray"/>
    <property type="resolution" value="1.61 A"/>
    <property type="chains" value="A/B/C/D=1-310"/>
</dbReference>
<dbReference type="PDBsum" id="1U60"/>
<dbReference type="SMR" id="P77454"/>
<dbReference type="BioGRID" id="4261985">
    <property type="interactions" value="21"/>
</dbReference>
<dbReference type="DIP" id="DIP-11307N"/>
<dbReference type="FunCoup" id="P77454">
    <property type="interactions" value="251"/>
</dbReference>
<dbReference type="IntAct" id="P77454">
    <property type="interactions" value="3"/>
</dbReference>
<dbReference type="STRING" id="511145.b0485"/>
<dbReference type="DrugBank" id="DB01942">
    <property type="generic name" value="Formic acid"/>
</dbReference>
<dbReference type="iPTMnet" id="P77454"/>
<dbReference type="jPOST" id="P77454"/>
<dbReference type="PaxDb" id="511145-b0485"/>
<dbReference type="EnsemblBacteria" id="AAC73587">
    <property type="protein sequence ID" value="AAC73587"/>
    <property type="gene ID" value="b0485"/>
</dbReference>
<dbReference type="GeneID" id="946187"/>
<dbReference type="KEGG" id="ecj:JW0474"/>
<dbReference type="KEGG" id="eco:b0485"/>
<dbReference type="KEGG" id="ecoc:C3026_02385"/>
<dbReference type="PATRIC" id="fig|1411691.4.peg.1791"/>
<dbReference type="EchoBASE" id="EB3036"/>
<dbReference type="eggNOG" id="COG2066">
    <property type="taxonomic scope" value="Bacteria"/>
</dbReference>
<dbReference type="HOGENOM" id="CLU_027932_1_0_6"/>
<dbReference type="InParanoid" id="P77454"/>
<dbReference type="OMA" id="NALMQTC"/>
<dbReference type="OrthoDB" id="9788822at2"/>
<dbReference type="PhylomeDB" id="P77454"/>
<dbReference type="BioCyc" id="EcoCyc:G6261-MONOMER"/>
<dbReference type="BioCyc" id="MetaCyc:G6261-MONOMER"/>
<dbReference type="BRENDA" id="3.5.1.2">
    <property type="organism ID" value="2026"/>
</dbReference>
<dbReference type="SABIO-RK" id="P77454"/>
<dbReference type="EvolutionaryTrace" id="P77454"/>
<dbReference type="PRO" id="PR:P77454"/>
<dbReference type="Proteomes" id="UP000000625">
    <property type="component" value="Chromosome"/>
</dbReference>
<dbReference type="GO" id="GO:0032991">
    <property type="term" value="C:protein-containing complex"/>
    <property type="evidence" value="ECO:0000314"/>
    <property type="project" value="EcoCyc"/>
</dbReference>
<dbReference type="GO" id="GO:0004359">
    <property type="term" value="F:glutaminase activity"/>
    <property type="evidence" value="ECO:0000314"/>
    <property type="project" value="EcoCyc"/>
</dbReference>
<dbReference type="GO" id="GO:0006537">
    <property type="term" value="P:glutamate biosynthetic process"/>
    <property type="evidence" value="ECO:0000318"/>
    <property type="project" value="GO_Central"/>
</dbReference>
<dbReference type="GO" id="GO:0006543">
    <property type="term" value="P:glutamine catabolic process"/>
    <property type="evidence" value="ECO:0000318"/>
    <property type="project" value="GO_Central"/>
</dbReference>
<dbReference type="GO" id="GO:0045926">
    <property type="term" value="P:negative regulation of growth"/>
    <property type="evidence" value="ECO:0000315"/>
    <property type="project" value="EcoliWiki"/>
</dbReference>
<dbReference type="GO" id="GO:0010447">
    <property type="term" value="P:response to acidic pH"/>
    <property type="evidence" value="ECO:0000315"/>
    <property type="project" value="EcoCyc"/>
</dbReference>
<dbReference type="FunFam" id="3.40.710.10:FF:000014">
    <property type="entry name" value="Glutaminase"/>
    <property type="match status" value="1"/>
</dbReference>
<dbReference type="Gene3D" id="3.40.710.10">
    <property type="entry name" value="DD-peptidase/beta-lactamase superfamily"/>
    <property type="match status" value="1"/>
</dbReference>
<dbReference type="HAMAP" id="MF_00313">
    <property type="entry name" value="Glutaminase"/>
    <property type="match status" value="1"/>
</dbReference>
<dbReference type="InterPro" id="IPR012338">
    <property type="entry name" value="Beta-lactam/transpept-like"/>
</dbReference>
<dbReference type="InterPro" id="IPR015868">
    <property type="entry name" value="Glutaminase"/>
</dbReference>
<dbReference type="NCBIfam" id="TIGR03814">
    <property type="entry name" value="Gln_ase"/>
    <property type="match status" value="1"/>
</dbReference>
<dbReference type="NCBIfam" id="NF009020">
    <property type="entry name" value="PRK12356.1"/>
    <property type="match status" value="1"/>
</dbReference>
<dbReference type="PANTHER" id="PTHR12544">
    <property type="entry name" value="GLUTAMINASE"/>
    <property type="match status" value="1"/>
</dbReference>
<dbReference type="PANTHER" id="PTHR12544:SF48">
    <property type="entry name" value="GLUTAMINASE 1"/>
    <property type="match status" value="1"/>
</dbReference>
<dbReference type="Pfam" id="PF04960">
    <property type="entry name" value="Glutaminase"/>
    <property type="match status" value="1"/>
</dbReference>
<dbReference type="SUPFAM" id="SSF56601">
    <property type="entry name" value="beta-lactamase/transpeptidase-like"/>
    <property type="match status" value="1"/>
</dbReference>